<accession>Q89F32</accession>
<sequence>MKNLILILPLLMLTGCVGDPADALTGPRLSPVGSGLRTQADPIPVTPRMRTPVSYRSTWDDGTDLYRDPRARRTGDVVTVIISMQDKAKLDNKTGRSRDSQIKFGLDWLMDVAGWADKGQTTANLSTNTQIKGNGQIDRTEDIKLSIAAIVTDVLPNGNMMISGSQEFRVNTEMRVLNVGGIVRPRDISRTNTISYEKIAEARVSYGGQGNLSDVQQPGWGHRIYDAVAPF</sequence>
<feature type="signal peptide" evidence="1">
    <location>
        <begin position="1"/>
        <end position="15"/>
    </location>
</feature>
<feature type="chain" id="PRO_0000009427" description="Flagellar L-ring protein 2">
    <location>
        <begin position="16"/>
        <end position="231"/>
    </location>
</feature>
<feature type="region of interest" description="Disordered" evidence="2">
    <location>
        <begin position="30"/>
        <end position="54"/>
    </location>
</feature>
<feature type="lipid moiety-binding region" description="N-palmitoyl cysteine" evidence="1">
    <location>
        <position position="16"/>
    </location>
</feature>
<feature type="lipid moiety-binding region" description="S-diacylglycerol cysteine" evidence="1">
    <location>
        <position position="16"/>
    </location>
</feature>
<dbReference type="EMBL" id="BA000040">
    <property type="protein sequence ID" value="BAC52134.1"/>
    <property type="molecule type" value="Genomic_DNA"/>
</dbReference>
<dbReference type="RefSeq" id="NP_773509.1">
    <property type="nucleotide sequence ID" value="NC_004463.1"/>
</dbReference>
<dbReference type="RefSeq" id="WP_011089607.1">
    <property type="nucleotide sequence ID" value="NC_004463.1"/>
</dbReference>
<dbReference type="SMR" id="Q89F32"/>
<dbReference type="FunCoup" id="Q89F32">
    <property type="interactions" value="119"/>
</dbReference>
<dbReference type="STRING" id="224911.AAV28_31935"/>
<dbReference type="EnsemblBacteria" id="BAC52134">
    <property type="protein sequence ID" value="BAC52134"/>
    <property type="gene ID" value="BAC52134"/>
</dbReference>
<dbReference type="GeneID" id="46493839"/>
<dbReference type="KEGG" id="bja:bll6869"/>
<dbReference type="PATRIC" id="fig|224911.44.peg.6899"/>
<dbReference type="eggNOG" id="COG2063">
    <property type="taxonomic scope" value="Bacteria"/>
</dbReference>
<dbReference type="HOGENOM" id="CLU_069313_1_2_5"/>
<dbReference type="InParanoid" id="Q89F32"/>
<dbReference type="OrthoDB" id="9789227at2"/>
<dbReference type="PhylomeDB" id="Q89F32"/>
<dbReference type="Proteomes" id="UP000002526">
    <property type="component" value="Chromosome"/>
</dbReference>
<dbReference type="GO" id="GO:0009427">
    <property type="term" value="C:bacterial-type flagellum basal body, distal rod, L ring"/>
    <property type="evidence" value="ECO:0007669"/>
    <property type="project" value="InterPro"/>
</dbReference>
<dbReference type="GO" id="GO:0009279">
    <property type="term" value="C:cell outer membrane"/>
    <property type="evidence" value="ECO:0007669"/>
    <property type="project" value="UniProtKB-SubCell"/>
</dbReference>
<dbReference type="GO" id="GO:0003774">
    <property type="term" value="F:cytoskeletal motor activity"/>
    <property type="evidence" value="ECO:0007669"/>
    <property type="project" value="InterPro"/>
</dbReference>
<dbReference type="GO" id="GO:0071973">
    <property type="term" value="P:bacterial-type flagellum-dependent cell motility"/>
    <property type="evidence" value="ECO:0007669"/>
    <property type="project" value="InterPro"/>
</dbReference>
<dbReference type="HAMAP" id="MF_00415">
    <property type="entry name" value="FlgH"/>
    <property type="match status" value="1"/>
</dbReference>
<dbReference type="InterPro" id="IPR000527">
    <property type="entry name" value="Flag_Lring"/>
</dbReference>
<dbReference type="NCBIfam" id="NF009429">
    <property type="entry name" value="PRK12788.1"/>
    <property type="match status" value="1"/>
</dbReference>
<dbReference type="PANTHER" id="PTHR34933">
    <property type="entry name" value="FLAGELLAR L-RING PROTEIN"/>
    <property type="match status" value="1"/>
</dbReference>
<dbReference type="PANTHER" id="PTHR34933:SF1">
    <property type="entry name" value="FLAGELLAR L-RING PROTEIN"/>
    <property type="match status" value="1"/>
</dbReference>
<dbReference type="Pfam" id="PF02107">
    <property type="entry name" value="FlgH"/>
    <property type="match status" value="1"/>
</dbReference>
<dbReference type="PRINTS" id="PR01008">
    <property type="entry name" value="FLGLRINGFLGH"/>
</dbReference>
<dbReference type="PROSITE" id="PS51257">
    <property type="entry name" value="PROKAR_LIPOPROTEIN"/>
    <property type="match status" value="1"/>
</dbReference>
<name>FLGH2_BRADU</name>
<keyword id="KW-0975">Bacterial flagellum</keyword>
<keyword id="KW-0998">Cell outer membrane</keyword>
<keyword id="KW-0449">Lipoprotein</keyword>
<keyword id="KW-0472">Membrane</keyword>
<keyword id="KW-0564">Palmitate</keyword>
<keyword id="KW-1185">Reference proteome</keyword>
<keyword id="KW-0732">Signal</keyword>
<evidence type="ECO:0000255" key="1">
    <source>
        <dbReference type="HAMAP-Rule" id="MF_00415"/>
    </source>
</evidence>
<evidence type="ECO:0000256" key="2">
    <source>
        <dbReference type="SAM" id="MobiDB-lite"/>
    </source>
</evidence>
<gene>
    <name evidence="1" type="primary">flgH2</name>
    <name type="ordered locus">bll6869</name>
</gene>
<reference key="1">
    <citation type="journal article" date="2002" name="DNA Res.">
        <title>Complete genomic sequence of nitrogen-fixing symbiotic bacterium Bradyrhizobium japonicum USDA110.</title>
        <authorList>
            <person name="Kaneko T."/>
            <person name="Nakamura Y."/>
            <person name="Sato S."/>
            <person name="Minamisawa K."/>
            <person name="Uchiumi T."/>
            <person name="Sasamoto S."/>
            <person name="Watanabe A."/>
            <person name="Idesawa K."/>
            <person name="Iriguchi M."/>
            <person name="Kawashima K."/>
            <person name="Kohara M."/>
            <person name="Matsumoto M."/>
            <person name="Shimpo S."/>
            <person name="Tsuruoka H."/>
            <person name="Wada T."/>
            <person name="Yamada M."/>
            <person name="Tabata S."/>
        </authorList>
    </citation>
    <scope>NUCLEOTIDE SEQUENCE [LARGE SCALE GENOMIC DNA]</scope>
    <source>
        <strain>JCM 10833 / BCRC 13528 / IAM 13628 / NBRC 14792 / USDA 110</strain>
    </source>
</reference>
<organism>
    <name type="scientific">Bradyrhizobium diazoefficiens (strain JCM 10833 / BCRC 13528 / IAM 13628 / NBRC 14792 / USDA 110)</name>
    <dbReference type="NCBI Taxonomy" id="224911"/>
    <lineage>
        <taxon>Bacteria</taxon>
        <taxon>Pseudomonadati</taxon>
        <taxon>Pseudomonadota</taxon>
        <taxon>Alphaproteobacteria</taxon>
        <taxon>Hyphomicrobiales</taxon>
        <taxon>Nitrobacteraceae</taxon>
        <taxon>Bradyrhizobium</taxon>
    </lineage>
</organism>
<comment type="function">
    <text evidence="1">Assembles around the rod to form the L-ring and probably protects the motor/basal body from shearing forces during rotation.</text>
</comment>
<comment type="subunit">
    <text evidence="1">The basal body constitutes a major portion of the flagellar organelle and consists of four rings (L,P,S, and M) mounted on a central rod.</text>
</comment>
<comment type="subcellular location">
    <subcellularLocation>
        <location evidence="1">Cell outer membrane</location>
        <topology evidence="1">Lipid-anchor</topology>
    </subcellularLocation>
    <subcellularLocation>
        <location evidence="1">Bacterial flagellum basal body</location>
    </subcellularLocation>
</comment>
<comment type="similarity">
    <text evidence="1">Belongs to the FlgH family.</text>
</comment>
<protein>
    <recommendedName>
        <fullName evidence="1">Flagellar L-ring protein 2</fullName>
    </recommendedName>
    <alternativeName>
        <fullName evidence="1">Basal body L-ring protein 2</fullName>
    </alternativeName>
</protein>
<proteinExistence type="inferred from homology"/>